<proteinExistence type="inferred from homology"/>
<gene>
    <name type="ORF">SPAP11E10.01</name>
</gene>
<comment type="subcellular location">
    <subcellularLocation>
        <location evidence="1">Cytoplasm</location>
    </subcellularLocation>
</comment>
<comment type="similarity">
    <text evidence="2">Belongs to the ornithine cyclodeaminase/mu-crystallin family.</text>
</comment>
<evidence type="ECO:0000269" key="1">
    <source>
    </source>
</evidence>
<evidence type="ECO:0000305" key="2"/>
<organism>
    <name type="scientific">Schizosaccharomyces pombe (strain 972 / ATCC 24843)</name>
    <name type="common">Fission yeast</name>
    <dbReference type="NCBI Taxonomy" id="284812"/>
    <lineage>
        <taxon>Eukaryota</taxon>
        <taxon>Fungi</taxon>
        <taxon>Dikarya</taxon>
        <taxon>Ascomycota</taxon>
        <taxon>Taphrinomycotina</taxon>
        <taxon>Schizosaccharomycetes</taxon>
        <taxon>Schizosaccharomycetales</taxon>
        <taxon>Schizosaccharomycetaceae</taxon>
        <taxon>Schizosaccharomyces</taxon>
    </lineage>
</organism>
<sequence>MSGSCQFLSRETLSSSLGWIPLINALREIFTENVVCPTRLHYPIDEDNPSSTANNILLIMPCWIPGKFLGVKQVNVFPENTKHGLPSLSSHYLLSDATTGCHLAQLDGNELTSRRTAAASALASSYLSKEDSTSLLIIGSGKVAEKLIHAHCSVRPIRSVRIWNHRFESAKSLASRASKELPSIQIDAVPIQNLENAVKCSDIISSATLSKKPIIVGSWINPGTHIDLVGGFTPHMHEADSKCIQISNVFVDTRKGALHEAGDLLTPIKEGLFSPNEVIADLFDLCNNKHSGRSQLKNPAEAITLFKSVGDSREDLAAASLAYKVHNKSS</sequence>
<feature type="chain" id="PRO_0000317233" description="Uncharacterized protein P11E10.01">
    <location>
        <begin position="1"/>
        <end position="330"/>
    </location>
</feature>
<dbReference type="EMBL" id="CU329670">
    <property type="protein sequence ID" value="CAC19749.1"/>
    <property type="molecule type" value="Genomic_DNA"/>
</dbReference>
<dbReference type="RefSeq" id="NP_593514.1">
    <property type="nucleotide sequence ID" value="NM_001018948.2"/>
</dbReference>
<dbReference type="SMR" id="Q9HDZ0"/>
<dbReference type="BioGRID" id="278140">
    <property type="interactions" value="3"/>
</dbReference>
<dbReference type="FunCoup" id="Q9HDZ0">
    <property type="interactions" value="446"/>
</dbReference>
<dbReference type="STRING" id="284812.Q9HDZ0"/>
<dbReference type="iPTMnet" id="Q9HDZ0"/>
<dbReference type="PaxDb" id="4896-SPAP11E10.01.1"/>
<dbReference type="EnsemblFungi" id="SPAP11E10.01.1">
    <property type="protein sequence ID" value="SPAP11E10.01.1:pep"/>
    <property type="gene ID" value="SPAP11E10.01"/>
</dbReference>
<dbReference type="KEGG" id="spo:2541644"/>
<dbReference type="PomBase" id="SPAP11E10.01"/>
<dbReference type="VEuPathDB" id="FungiDB:SPAP11E10.01"/>
<dbReference type="eggNOG" id="KOG3007">
    <property type="taxonomic scope" value="Eukaryota"/>
</dbReference>
<dbReference type="HOGENOM" id="CLU_042088_1_2_1"/>
<dbReference type="InParanoid" id="Q9HDZ0"/>
<dbReference type="OMA" id="VKIVNVH"/>
<dbReference type="PhylomeDB" id="Q9HDZ0"/>
<dbReference type="Reactome" id="R-SPO-71064">
    <property type="pathway name" value="Lysine catabolism"/>
</dbReference>
<dbReference type="PRO" id="PR:Q9HDZ0"/>
<dbReference type="Proteomes" id="UP000002485">
    <property type="component" value="Chromosome I"/>
</dbReference>
<dbReference type="GO" id="GO:0005737">
    <property type="term" value="C:cytoplasm"/>
    <property type="evidence" value="ECO:0007005"/>
    <property type="project" value="PomBase"/>
</dbReference>
<dbReference type="GO" id="GO:0003824">
    <property type="term" value="F:catalytic activity"/>
    <property type="evidence" value="ECO:0000303"/>
    <property type="project" value="PomBase"/>
</dbReference>
<dbReference type="FunFam" id="3.40.50.720:FF:000311">
    <property type="entry name" value="Ornithine cyclodeaminase"/>
    <property type="match status" value="1"/>
</dbReference>
<dbReference type="Gene3D" id="3.40.50.720">
    <property type="entry name" value="NAD(P)-binding Rossmann-like Domain"/>
    <property type="match status" value="1"/>
</dbReference>
<dbReference type="Gene3D" id="3.30.1780.10">
    <property type="entry name" value="ornithine cyclodeaminase, domain 1"/>
    <property type="match status" value="1"/>
</dbReference>
<dbReference type="InterPro" id="IPR036291">
    <property type="entry name" value="NAD(P)-bd_dom_sf"/>
</dbReference>
<dbReference type="InterPro" id="IPR003462">
    <property type="entry name" value="ODC_Mu_crystall"/>
</dbReference>
<dbReference type="InterPro" id="IPR023401">
    <property type="entry name" value="ODC_N"/>
</dbReference>
<dbReference type="NCBIfam" id="NF004793">
    <property type="entry name" value="PRK06141.1"/>
    <property type="match status" value="1"/>
</dbReference>
<dbReference type="PANTHER" id="PTHR13812">
    <property type="entry name" value="KETIMINE REDUCTASE MU-CRYSTALLIN"/>
    <property type="match status" value="1"/>
</dbReference>
<dbReference type="PANTHER" id="PTHR13812:SF19">
    <property type="entry name" value="KETIMINE REDUCTASE MU-CRYSTALLIN"/>
    <property type="match status" value="1"/>
</dbReference>
<dbReference type="Pfam" id="PF02423">
    <property type="entry name" value="OCD_Mu_crystall"/>
    <property type="match status" value="1"/>
</dbReference>
<dbReference type="PIRSF" id="PIRSF001439">
    <property type="entry name" value="CryM"/>
    <property type="match status" value="1"/>
</dbReference>
<dbReference type="SUPFAM" id="SSF51735">
    <property type="entry name" value="NAD(P)-binding Rossmann-fold domains"/>
    <property type="match status" value="1"/>
</dbReference>
<protein>
    <recommendedName>
        <fullName>Uncharacterized protein P11E10.01</fullName>
    </recommendedName>
</protein>
<name>YK01_SCHPO</name>
<keyword id="KW-0963">Cytoplasm</keyword>
<keyword id="KW-1185">Reference proteome</keyword>
<reference key="1">
    <citation type="journal article" date="2002" name="Nature">
        <title>The genome sequence of Schizosaccharomyces pombe.</title>
        <authorList>
            <person name="Wood V."/>
            <person name="Gwilliam R."/>
            <person name="Rajandream M.A."/>
            <person name="Lyne M.H."/>
            <person name="Lyne R."/>
            <person name="Stewart A."/>
            <person name="Sgouros J.G."/>
            <person name="Peat N."/>
            <person name="Hayles J."/>
            <person name="Baker S.G."/>
            <person name="Basham D."/>
            <person name="Bowman S."/>
            <person name="Brooks K."/>
            <person name="Brown D."/>
            <person name="Brown S."/>
            <person name="Chillingworth T."/>
            <person name="Churcher C.M."/>
            <person name="Collins M."/>
            <person name="Connor R."/>
            <person name="Cronin A."/>
            <person name="Davis P."/>
            <person name="Feltwell T."/>
            <person name="Fraser A."/>
            <person name="Gentles S."/>
            <person name="Goble A."/>
            <person name="Hamlin N."/>
            <person name="Harris D.E."/>
            <person name="Hidalgo J."/>
            <person name="Hodgson G."/>
            <person name="Holroyd S."/>
            <person name="Hornsby T."/>
            <person name="Howarth S."/>
            <person name="Huckle E.J."/>
            <person name="Hunt S."/>
            <person name="Jagels K."/>
            <person name="James K.D."/>
            <person name="Jones L."/>
            <person name="Jones M."/>
            <person name="Leather S."/>
            <person name="McDonald S."/>
            <person name="McLean J."/>
            <person name="Mooney P."/>
            <person name="Moule S."/>
            <person name="Mungall K.L."/>
            <person name="Murphy L.D."/>
            <person name="Niblett D."/>
            <person name="Odell C."/>
            <person name="Oliver K."/>
            <person name="O'Neil S."/>
            <person name="Pearson D."/>
            <person name="Quail M.A."/>
            <person name="Rabbinowitsch E."/>
            <person name="Rutherford K.M."/>
            <person name="Rutter S."/>
            <person name="Saunders D."/>
            <person name="Seeger K."/>
            <person name="Sharp S."/>
            <person name="Skelton J."/>
            <person name="Simmonds M.N."/>
            <person name="Squares R."/>
            <person name="Squares S."/>
            <person name="Stevens K."/>
            <person name="Taylor K."/>
            <person name="Taylor R.G."/>
            <person name="Tivey A."/>
            <person name="Walsh S.V."/>
            <person name="Warren T."/>
            <person name="Whitehead S."/>
            <person name="Woodward J.R."/>
            <person name="Volckaert G."/>
            <person name="Aert R."/>
            <person name="Robben J."/>
            <person name="Grymonprez B."/>
            <person name="Weltjens I."/>
            <person name="Vanstreels E."/>
            <person name="Rieger M."/>
            <person name="Schaefer M."/>
            <person name="Mueller-Auer S."/>
            <person name="Gabel C."/>
            <person name="Fuchs M."/>
            <person name="Duesterhoeft A."/>
            <person name="Fritzc C."/>
            <person name="Holzer E."/>
            <person name="Moestl D."/>
            <person name="Hilbert H."/>
            <person name="Borzym K."/>
            <person name="Langer I."/>
            <person name="Beck A."/>
            <person name="Lehrach H."/>
            <person name="Reinhardt R."/>
            <person name="Pohl T.M."/>
            <person name="Eger P."/>
            <person name="Zimmermann W."/>
            <person name="Wedler H."/>
            <person name="Wambutt R."/>
            <person name="Purnelle B."/>
            <person name="Goffeau A."/>
            <person name="Cadieu E."/>
            <person name="Dreano S."/>
            <person name="Gloux S."/>
            <person name="Lelaure V."/>
            <person name="Mottier S."/>
            <person name="Galibert F."/>
            <person name="Aves S.J."/>
            <person name="Xiang Z."/>
            <person name="Hunt C."/>
            <person name="Moore K."/>
            <person name="Hurst S.M."/>
            <person name="Lucas M."/>
            <person name="Rochet M."/>
            <person name="Gaillardin C."/>
            <person name="Tallada V.A."/>
            <person name="Garzon A."/>
            <person name="Thode G."/>
            <person name="Daga R.R."/>
            <person name="Cruzado L."/>
            <person name="Jimenez J."/>
            <person name="Sanchez M."/>
            <person name="del Rey F."/>
            <person name="Benito J."/>
            <person name="Dominguez A."/>
            <person name="Revuelta J.L."/>
            <person name="Moreno S."/>
            <person name="Armstrong J."/>
            <person name="Forsburg S.L."/>
            <person name="Cerutti L."/>
            <person name="Lowe T."/>
            <person name="McCombie W.R."/>
            <person name="Paulsen I."/>
            <person name="Potashkin J."/>
            <person name="Shpakovski G.V."/>
            <person name="Ussery D."/>
            <person name="Barrell B.G."/>
            <person name="Nurse P."/>
        </authorList>
    </citation>
    <scope>NUCLEOTIDE SEQUENCE [LARGE SCALE GENOMIC DNA]</scope>
    <source>
        <strain>972 / ATCC 24843</strain>
    </source>
</reference>
<reference key="2">
    <citation type="journal article" date="2006" name="Nat. Biotechnol.">
        <title>ORFeome cloning and global analysis of protein localization in the fission yeast Schizosaccharomyces pombe.</title>
        <authorList>
            <person name="Matsuyama A."/>
            <person name="Arai R."/>
            <person name="Yashiroda Y."/>
            <person name="Shirai A."/>
            <person name="Kamata A."/>
            <person name="Sekido S."/>
            <person name="Kobayashi Y."/>
            <person name="Hashimoto A."/>
            <person name="Hamamoto M."/>
            <person name="Hiraoka Y."/>
            <person name="Horinouchi S."/>
            <person name="Yoshida M."/>
        </authorList>
    </citation>
    <scope>SUBCELLULAR LOCATION [LARGE SCALE ANALYSIS]</scope>
</reference>
<accession>Q9HDZ0</accession>